<name>SOXR_ARTST</name>
<gene>
    <name type="primary">soxR</name>
</gene>
<dbReference type="EMBL" id="D63413">
    <property type="protein sequence ID" value="BAA09717.1"/>
    <property type="molecule type" value="Genomic_DNA"/>
</dbReference>
<dbReference type="SMR" id="Q44311"/>
<dbReference type="GO" id="GO:0003700">
    <property type="term" value="F:DNA-binding transcription factor activity"/>
    <property type="evidence" value="ECO:0007669"/>
    <property type="project" value="InterPro"/>
</dbReference>
<dbReference type="GO" id="GO:0000976">
    <property type="term" value="F:transcription cis-regulatory region binding"/>
    <property type="evidence" value="ECO:0007669"/>
    <property type="project" value="TreeGrafter"/>
</dbReference>
<dbReference type="CDD" id="cd08442">
    <property type="entry name" value="PBP2_YofA_SoxR_like"/>
    <property type="match status" value="1"/>
</dbReference>
<dbReference type="FunFam" id="1.10.10.10:FF:000001">
    <property type="entry name" value="LysR family transcriptional regulator"/>
    <property type="match status" value="1"/>
</dbReference>
<dbReference type="Gene3D" id="3.40.190.290">
    <property type="match status" value="1"/>
</dbReference>
<dbReference type="Gene3D" id="1.10.10.10">
    <property type="entry name" value="Winged helix-like DNA-binding domain superfamily/Winged helix DNA-binding domain"/>
    <property type="match status" value="1"/>
</dbReference>
<dbReference type="InterPro" id="IPR005119">
    <property type="entry name" value="LysR_subst-bd"/>
</dbReference>
<dbReference type="InterPro" id="IPR000847">
    <property type="entry name" value="Tscrpt_reg_HTH_LysR"/>
</dbReference>
<dbReference type="InterPro" id="IPR036388">
    <property type="entry name" value="WH-like_DNA-bd_sf"/>
</dbReference>
<dbReference type="InterPro" id="IPR036390">
    <property type="entry name" value="WH_DNA-bd_sf"/>
</dbReference>
<dbReference type="PANTHER" id="PTHR30126">
    <property type="entry name" value="HTH-TYPE TRANSCRIPTIONAL REGULATOR"/>
    <property type="match status" value="1"/>
</dbReference>
<dbReference type="PANTHER" id="PTHR30126:SF40">
    <property type="entry name" value="HTH-TYPE TRANSCRIPTIONAL REGULATOR GLTR"/>
    <property type="match status" value="1"/>
</dbReference>
<dbReference type="Pfam" id="PF00126">
    <property type="entry name" value="HTH_1"/>
    <property type="match status" value="1"/>
</dbReference>
<dbReference type="Pfam" id="PF03466">
    <property type="entry name" value="LysR_substrate"/>
    <property type="match status" value="1"/>
</dbReference>
<dbReference type="PRINTS" id="PR00039">
    <property type="entry name" value="HTHLYSR"/>
</dbReference>
<dbReference type="SUPFAM" id="SSF53850">
    <property type="entry name" value="Periplasmic binding protein-like II"/>
    <property type="match status" value="1"/>
</dbReference>
<dbReference type="SUPFAM" id="SSF46785">
    <property type="entry name" value="Winged helix' DNA-binding domain"/>
    <property type="match status" value="1"/>
</dbReference>
<dbReference type="PROSITE" id="PS50931">
    <property type="entry name" value="HTH_LYSR"/>
    <property type="match status" value="1"/>
</dbReference>
<organism>
    <name type="scientific">Arthrobacter sp. (strain TE1826)</name>
    <dbReference type="NCBI Taxonomy" id="68999"/>
    <lineage>
        <taxon>Bacteria</taxon>
        <taxon>Bacillati</taxon>
        <taxon>Actinomycetota</taxon>
        <taxon>Actinomycetes</taxon>
        <taxon>Micrococcales</taxon>
        <taxon>Micrococcaceae</taxon>
        <taxon>Arthrobacter</taxon>
    </lineage>
</organism>
<protein>
    <recommendedName>
        <fullName>HTH-type transcriptional regulator SoxR</fullName>
    </recommendedName>
</protein>
<evidence type="ECO:0000255" key="1">
    <source>
        <dbReference type="PROSITE-ProRule" id="PRU00253"/>
    </source>
</evidence>
<evidence type="ECO:0000305" key="2"/>
<keyword id="KW-0238">DNA-binding</keyword>
<keyword id="KW-0678">Repressor</keyword>
<keyword id="KW-0804">Transcription</keyword>
<keyword id="KW-0805">Transcription regulation</keyword>
<accession>Q44311</accession>
<proteinExistence type="inferred from homology"/>
<feature type="chain" id="PRO_0000105751" description="HTH-type transcriptional regulator SoxR">
    <location>
        <begin position="1"/>
        <end position="289"/>
    </location>
</feature>
<feature type="domain" description="HTH lysR-type" evidence="1">
    <location>
        <begin position="1"/>
        <end position="58"/>
    </location>
</feature>
<feature type="DNA-binding region" description="H-T-H motif" evidence="1">
    <location>
        <begin position="18"/>
        <end position="37"/>
    </location>
</feature>
<comment type="function">
    <text>Transcriptional repressor of soxA gene expression.</text>
</comment>
<comment type="similarity">
    <text evidence="2">Belongs to the LysR transcriptional regulatory family.</text>
</comment>
<reference key="1">
    <citation type="journal article" date="1996" name="J. Ferment. Bioeng.">
        <title>Analysis of a negative regulator, SoxR, for the Arthrobacter sarcosine oxidase gene.</title>
        <authorList>
            <person name="Nishiya Y."/>
            <person name="Imanaka T."/>
        </authorList>
    </citation>
    <scope>NUCLEOTIDE SEQUENCE [GENOMIC DNA]</scope>
</reference>
<sequence length="289" mass="32765">MEIKDLQIFQKVVEYGSVSKAAKSLNYVQSYVTVRIQKLEEELQTELFHRSSRGMVLNSEGKTLLFYSQNIISMVDEMIKVVQDCDNPAGSLEIGTVETVNKLPSILSAYHKKYPKIDLSLITGVTEDLVDDVLNYKLDGAFVTGYYNHPQIIQYEVFEEELVLISNYDKLPFEELKNKPLLVFKQGCSYRAKLEGWVRDEGEINAKIMEFGTMETILGSVIAGLGITIIPKSTISLLEAEGVVRIYEIPEKYSKITTVFIHRADTFLTNALQKFIETIKNAPETARKL</sequence>